<name>GATB_RHIME</name>
<reference key="1">
    <citation type="journal article" date="2001" name="Proc. Natl. Acad. Sci. U.S.A.">
        <title>Analysis of the chromosome sequence of the legume symbiont Sinorhizobium meliloti strain 1021.</title>
        <authorList>
            <person name="Capela D."/>
            <person name="Barloy-Hubler F."/>
            <person name="Gouzy J."/>
            <person name="Bothe G."/>
            <person name="Ampe F."/>
            <person name="Batut J."/>
            <person name="Boistard P."/>
            <person name="Becker A."/>
            <person name="Boutry M."/>
            <person name="Cadieu E."/>
            <person name="Dreano S."/>
            <person name="Gloux S."/>
            <person name="Godrie T."/>
            <person name="Goffeau A."/>
            <person name="Kahn D."/>
            <person name="Kiss E."/>
            <person name="Lelaure V."/>
            <person name="Masuy D."/>
            <person name="Pohl T."/>
            <person name="Portetelle D."/>
            <person name="Puehler A."/>
            <person name="Purnelle B."/>
            <person name="Ramsperger U."/>
            <person name="Renard C."/>
            <person name="Thebault P."/>
            <person name="Vandenbol M."/>
            <person name="Weidner S."/>
            <person name="Galibert F."/>
        </authorList>
    </citation>
    <scope>NUCLEOTIDE SEQUENCE [LARGE SCALE GENOMIC DNA]</scope>
    <source>
        <strain>1021</strain>
    </source>
</reference>
<reference key="2">
    <citation type="journal article" date="2001" name="Science">
        <title>The composite genome of the legume symbiont Sinorhizobium meliloti.</title>
        <authorList>
            <person name="Galibert F."/>
            <person name="Finan T.M."/>
            <person name="Long S.R."/>
            <person name="Puehler A."/>
            <person name="Abola P."/>
            <person name="Ampe F."/>
            <person name="Barloy-Hubler F."/>
            <person name="Barnett M.J."/>
            <person name="Becker A."/>
            <person name="Boistard P."/>
            <person name="Bothe G."/>
            <person name="Boutry M."/>
            <person name="Bowser L."/>
            <person name="Buhrmester J."/>
            <person name="Cadieu E."/>
            <person name="Capela D."/>
            <person name="Chain P."/>
            <person name="Cowie A."/>
            <person name="Davis R.W."/>
            <person name="Dreano S."/>
            <person name="Federspiel N.A."/>
            <person name="Fisher R.F."/>
            <person name="Gloux S."/>
            <person name="Godrie T."/>
            <person name="Goffeau A."/>
            <person name="Golding B."/>
            <person name="Gouzy J."/>
            <person name="Gurjal M."/>
            <person name="Hernandez-Lucas I."/>
            <person name="Hong A."/>
            <person name="Huizar L."/>
            <person name="Hyman R.W."/>
            <person name="Jones T."/>
            <person name="Kahn D."/>
            <person name="Kahn M.L."/>
            <person name="Kalman S."/>
            <person name="Keating D.H."/>
            <person name="Kiss E."/>
            <person name="Komp C."/>
            <person name="Lelaure V."/>
            <person name="Masuy D."/>
            <person name="Palm C."/>
            <person name="Peck M.C."/>
            <person name="Pohl T.M."/>
            <person name="Portetelle D."/>
            <person name="Purnelle B."/>
            <person name="Ramsperger U."/>
            <person name="Surzycki R."/>
            <person name="Thebault P."/>
            <person name="Vandenbol M."/>
            <person name="Vorhoelter F.J."/>
            <person name="Weidner S."/>
            <person name="Wells D.H."/>
            <person name="Wong K."/>
            <person name="Yeh K.-C."/>
            <person name="Batut J."/>
        </authorList>
    </citation>
    <scope>NUCLEOTIDE SEQUENCE [LARGE SCALE GENOMIC DNA]</scope>
    <source>
        <strain>1021</strain>
    </source>
</reference>
<comment type="function">
    <text evidence="1">Allows the formation of correctly charged Asn-tRNA(Asn) or Gln-tRNA(Gln) through the transamidation of misacylated Asp-tRNA(Asn) or Glu-tRNA(Gln) in organisms which lack either or both of asparaginyl-tRNA or glutaminyl-tRNA synthetases. The reaction takes place in the presence of glutamine and ATP through an activated phospho-Asp-tRNA(Asn) or phospho-Glu-tRNA(Gln).</text>
</comment>
<comment type="catalytic activity">
    <reaction evidence="1">
        <text>L-glutamyl-tRNA(Gln) + L-glutamine + ATP + H2O = L-glutaminyl-tRNA(Gln) + L-glutamate + ADP + phosphate + H(+)</text>
        <dbReference type="Rhea" id="RHEA:17521"/>
        <dbReference type="Rhea" id="RHEA-COMP:9681"/>
        <dbReference type="Rhea" id="RHEA-COMP:9684"/>
        <dbReference type="ChEBI" id="CHEBI:15377"/>
        <dbReference type="ChEBI" id="CHEBI:15378"/>
        <dbReference type="ChEBI" id="CHEBI:29985"/>
        <dbReference type="ChEBI" id="CHEBI:30616"/>
        <dbReference type="ChEBI" id="CHEBI:43474"/>
        <dbReference type="ChEBI" id="CHEBI:58359"/>
        <dbReference type="ChEBI" id="CHEBI:78520"/>
        <dbReference type="ChEBI" id="CHEBI:78521"/>
        <dbReference type="ChEBI" id="CHEBI:456216"/>
    </reaction>
</comment>
<comment type="catalytic activity">
    <reaction evidence="1">
        <text>L-aspartyl-tRNA(Asn) + L-glutamine + ATP + H2O = L-asparaginyl-tRNA(Asn) + L-glutamate + ADP + phosphate + 2 H(+)</text>
        <dbReference type="Rhea" id="RHEA:14513"/>
        <dbReference type="Rhea" id="RHEA-COMP:9674"/>
        <dbReference type="Rhea" id="RHEA-COMP:9677"/>
        <dbReference type="ChEBI" id="CHEBI:15377"/>
        <dbReference type="ChEBI" id="CHEBI:15378"/>
        <dbReference type="ChEBI" id="CHEBI:29985"/>
        <dbReference type="ChEBI" id="CHEBI:30616"/>
        <dbReference type="ChEBI" id="CHEBI:43474"/>
        <dbReference type="ChEBI" id="CHEBI:58359"/>
        <dbReference type="ChEBI" id="CHEBI:78515"/>
        <dbReference type="ChEBI" id="CHEBI:78516"/>
        <dbReference type="ChEBI" id="CHEBI:456216"/>
    </reaction>
</comment>
<comment type="subunit">
    <text evidence="1">Heterotrimer of A, B and C subunits.</text>
</comment>
<comment type="similarity">
    <text evidence="1">Belongs to the GatB/GatE family. GatB subfamily.</text>
</comment>
<comment type="sequence caution" evidence="2">
    <conflict type="erroneous initiation">
        <sequence resource="EMBL-CDS" id="CAC45893"/>
    </conflict>
</comment>
<feature type="chain" id="PRO_0000148828" description="Aspartyl/glutamyl-tRNA(Asn/Gln) amidotransferase subunit B">
    <location>
        <begin position="1"/>
        <end position="500"/>
    </location>
</feature>
<proteinExistence type="inferred from homology"/>
<organism>
    <name type="scientific">Rhizobium meliloti (strain 1021)</name>
    <name type="common">Ensifer meliloti</name>
    <name type="synonym">Sinorhizobium meliloti</name>
    <dbReference type="NCBI Taxonomy" id="266834"/>
    <lineage>
        <taxon>Bacteria</taxon>
        <taxon>Pseudomonadati</taxon>
        <taxon>Pseudomonadota</taxon>
        <taxon>Alphaproteobacteria</taxon>
        <taxon>Hyphomicrobiales</taxon>
        <taxon>Rhizobiaceae</taxon>
        <taxon>Sinorhizobium/Ensifer group</taxon>
        <taxon>Sinorhizobium</taxon>
    </lineage>
</organism>
<gene>
    <name evidence="1" type="primary">gatB</name>
    <name type="ordered locus">R01314</name>
    <name type="ORF">SMc01350</name>
</gene>
<protein>
    <recommendedName>
        <fullName evidence="1">Aspartyl/glutamyl-tRNA(Asn/Gln) amidotransferase subunit B</fullName>
        <shortName evidence="1">Asp/Glu-ADT subunit B</shortName>
        <ecNumber evidence="1">6.3.5.-</ecNumber>
    </recommendedName>
</protein>
<accession>Q92QK5</accession>
<keyword id="KW-0067">ATP-binding</keyword>
<keyword id="KW-0436">Ligase</keyword>
<keyword id="KW-0547">Nucleotide-binding</keyword>
<keyword id="KW-0648">Protein biosynthesis</keyword>
<keyword id="KW-1185">Reference proteome</keyword>
<dbReference type="EC" id="6.3.5.-" evidence="1"/>
<dbReference type="EMBL" id="AL591688">
    <property type="protein sequence ID" value="CAC45893.1"/>
    <property type="status" value="ALT_INIT"/>
    <property type="molecule type" value="Genomic_DNA"/>
</dbReference>
<dbReference type="RefSeq" id="NP_385420.1">
    <property type="nucleotide sequence ID" value="NC_003047.1"/>
</dbReference>
<dbReference type="RefSeq" id="WP_003533056.1">
    <property type="nucleotide sequence ID" value="NC_003047.1"/>
</dbReference>
<dbReference type="SMR" id="Q92QK5"/>
<dbReference type="EnsemblBacteria" id="CAC45893">
    <property type="protein sequence ID" value="CAC45893"/>
    <property type="gene ID" value="SMc01350"/>
</dbReference>
<dbReference type="KEGG" id="sme:SMc01350"/>
<dbReference type="PATRIC" id="fig|266834.11.peg.2728"/>
<dbReference type="eggNOG" id="COG0064">
    <property type="taxonomic scope" value="Bacteria"/>
</dbReference>
<dbReference type="HOGENOM" id="CLU_019240_0_0_5"/>
<dbReference type="OrthoDB" id="9804078at2"/>
<dbReference type="Proteomes" id="UP000001976">
    <property type="component" value="Chromosome"/>
</dbReference>
<dbReference type="GO" id="GO:0050566">
    <property type="term" value="F:asparaginyl-tRNA synthase (glutamine-hydrolyzing) activity"/>
    <property type="evidence" value="ECO:0007669"/>
    <property type="project" value="RHEA"/>
</dbReference>
<dbReference type="GO" id="GO:0005524">
    <property type="term" value="F:ATP binding"/>
    <property type="evidence" value="ECO:0007669"/>
    <property type="project" value="UniProtKB-KW"/>
</dbReference>
<dbReference type="GO" id="GO:0050567">
    <property type="term" value="F:glutaminyl-tRNA synthase (glutamine-hydrolyzing) activity"/>
    <property type="evidence" value="ECO:0007669"/>
    <property type="project" value="UniProtKB-UniRule"/>
</dbReference>
<dbReference type="GO" id="GO:0070681">
    <property type="term" value="P:glutaminyl-tRNAGln biosynthesis via transamidation"/>
    <property type="evidence" value="ECO:0007669"/>
    <property type="project" value="TreeGrafter"/>
</dbReference>
<dbReference type="GO" id="GO:0006412">
    <property type="term" value="P:translation"/>
    <property type="evidence" value="ECO:0007669"/>
    <property type="project" value="UniProtKB-UniRule"/>
</dbReference>
<dbReference type="FunFam" id="1.10.10.410:FF:000001">
    <property type="entry name" value="Aspartyl/glutamyl-tRNA(Asn/Gln) amidotransferase subunit B"/>
    <property type="match status" value="1"/>
</dbReference>
<dbReference type="FunFam" id="1.10.150.380:FF:000001">
    <property type="entry name" value="Aspartyl/glutamyl-tRNA(Asn/Gln) amidotransferase subunit B"/>
    <property type="match status" value="1"/>
</dbReference>
<dbReference type="Gene3D" id="1.10.10.410">
    <property type="match status" value="1"/>
</dbReference>
<dbReference type="Gene3D" id="1.10.150.380">
    <property type="entry name" value="GatB domain, N-terminal subdomain"/>
    <property type="match status" value="1"/>
</dbReference>
<dbReference type="HAMAP" id="MF_00121">
    <property type="entry name" value="GatB"/>
    <property type="match status" value="1"/>
</dbReference>
<dbReference type="InterPro" id="IPR017959">
    <property type="entry name" value="Asn/Gln-tRNA_amidoTrfase_suB/E"/>
</dbReference>
<dbReference type="InterPro" id="IPR006075">
    <property type="entry name" value="Asn/Gln-tRNA_Trfase_suB/E_cat"/>
</dbReference>
<dbReference type="InterPro" id="IPR018027">
    <property type="entry name" value="Asn/Gln_amidotransferase"/>
</dbReference>
<dbReference type="InterPro" id="IPR003789">
    <property type="entry name" value="Asn/Gln_tRNA_amidoTrase-B-like"/>
</dbReference>
<dbReference type="InterPro" id="IPR004413">
    <property type="entry name" value="GatB"/>
</dbReference>
<dbReference type="InterPro" id="IPR042114">
    <property type="entry name" value="GatB_C_1"/>
</dbReference>
<dbReference type="InterPro" id="IPR023168">
    <property type="entry name" value="GatB_Yqey_C_2"/>
</dbReference>
<dbReference type="InterPro" id="IPR017958">
    <property type="entry name" value="Gln-tRNA_amidoTrfase_suB_CS"/>
</dbReference>
<dbReference type="InterPro" id="IPR014746">
    <property type="entry name" value="Gln_synth/guanido_kin_cat_dom"/>
</dbReference>
<dbReference type="NCBIfam" id="TIGR00133">
    <property type="entry name" value="gatB"/>
    <property type="match status" value="1"/>
</dbReference>
<dbReference type="NCBIfam" id="NF004012">
    <property type="entry name" value="PRK05477.1-2"/>
    <property type="match status" value="1"/>
</dbReference>
<dbReference type="NCBIfam" id="NF004014">
    <property type="entry name" value="PRK05477.1-4"/>
    <property type="match status" value="1"/>
</dbReference>
<dbReference type="NCBIfam" id="NF004015">
    <property type="entry name" value="PRK05477.1-5"/>
    <property type="match status" value="1"/>
</dbReference>
<dbReference type="PANTHER" id="PTHR11659">
    <property type="entry name" value="GLUTAMYL-TRNA GLN AMIDOTRANSFERASE SUBUNIT B MITOCHONDRIAL AND PROKARYOTIC PET112-RELATED"/>
    <property type="match status" value="1"/>
</dbReference>
<dbReference type="PANTHER" id="PTHR11659:SF0">
    <property type="entry name" value="GLUTAMYL-TRNA(GLN) AMIDOTRANSFERASE SUBUNIT B, MITOCHONDRIAL"/>
    <property type="match status" value="1"/>
</dbReference>
<dbReference type="Pfam" id="PF02934">
    <property type="entry name" value="GatB_N"/>
    <property type="match status" value="1"/>
</dbReference>
<dbReference type="Pfam" id="PF02637">
    <property type="entry name" value="GatB_Yqey"/>
    <property type="match status" value="1"/>
</dbReference>
<dbReference type="SMART" id="SM00845">
    <property type="entry name" value="GatB_Yqey"/>
    <property type="match status" value="1"/>
</dbReference>
<dbReference type="SUPFAM" id="SSF89095">
    <property type="entry name" value="GatB/YqeY motif"/>
    <property type="match status" value="1"/>
</dbReference>
<dbReference type="SUPFAM" id="SSF55931">
    <property type="entry name" value="Glutamine synthetase/guanido kinase"/>
    <property type="match status" value="1"/>
</dbReference>
<dbReference type="PROSITE" id="PS01234">
    <property type="entry name" value="GATB"/>
    <property type="match status" value="1"/>
</dbReference>
<evidence type="ECO:0000255" key="1">
    <source>
        <dbReference type="HAMAP-Rule" id="MF_00121"/>
    </source>
</evidence>
<evidence type="ECO:0000305" key="2"/>
<sequence length="500" mass="54721">MSIVDVRTPDPKRFIPGATGDWEVIIGMEVHAQVLSNSKLFSSASTEFGSEPNANVSLVDAAMPGMLPVINEECVKQAVRTGLGLKAKINNRSIFDRKNYFYPDLPQGYQISQYKDPIVGEGKIIISVGPDRQGQFEDVEIGIERLHLEQDAGKSMHDQHPAMSYVDLNRSGVALMEIVSKPDLRSSDEAKAYLTKLRSILRYLGTCDGNMDEGSMRADVNVSVRRPGEAFGTRCEIKNVNSIRFVGQSIEYEARRQIAILEDGGAIDQETRLFDANKGETRSMRSKEEAHDYRYFPDPDLLPLEFDDAFVEALKADLPELPDDKKERFVRDLGLSVYDASVLVSEKAIADYFEAVAEGRDGKAAANWVINDLLGALNKAGKTIEETPVSPAQLGGIIDLIKDGTISGKLAKDVFEILWNEGGDPAEIVESRGMKQVTDTGAIEKAVDEIIAANPDQVEKAKAKPSLAGWFVGQVMKATGGKANPQAVQALVKSKLGIEE</sequence>